<accession>A7ZTE9</accession>
<gene>
    <name evidence="1" type="primary">mtlD</name>
    <name type="ordered locus">EcE24377A_4099</name>
</gene>
<dbReference type="EC" id="1.1.1.17" evidence="1"/>
<dbReference type="EMBL" id="CP000800">
    <property type="protein sequence ID" value="ABV20147.1"/>
    <property type="molecule type" value="Genomic_DNA"/>
</dbReference>
<dbReference type="RefSeq" id="WP_000645424.1">
    <property type="nucleotide sequence ID" value="NC_009801.1"/>
</dbReference>
<dbReference type="SMR" id="A7ZTE9"/>
<dbReference type="KEGG" id="ecw:EcE24377A_4099"/>
<dbReference type="HOGENOM" id="CLU_036089_2_0_6"/>
<dbReference type="Proteomes" id="UP000001122">
    <property type="component" value="Chromosome"/>
</dbReference>
<dbReference type="GO" id="GO:0005829">
    <property type="term" value="C:cytosol"/>
    <property type="evidence" value="ECO:0007669"/>
    <property type="project" value="TreeGrafter"/>
</dbReference>
<dbReference type="GO" id="GO:0008926">
    <property type="term" value="F:mannitol-1-phosphate 5-dehydrogenase activity"/>
    <property type="evidence" value="ECO:0007669"/>
    <property type="project" value="UniProtKB-UniRule"/>
</dbReference>
<dbReference type="GO" id="GO:0019592">
    <property type="term" value="P:mannitol catabolic process"/>
    <property type="evidence" value="ECO:0007669"/>
    <property type="project" value="TreeGrafter"/>
</dbReference>
<dbReference type="FunFam" id="1.10.1040.10:FF:000009">
    <property type="entry name" value="Mannitol-1-phosphate 5-dehydrogenase"/>
    <property type="match status" value="1"/>
</dbReference>
<dbReference type="FunFam" id="3.40.50.720:FF:000075">
    <property type="entry name" value="Mannitol-1-phosphate 5-dehydrogenase"/>
    <property type="match status" value="1"/>
</dbReference>
<dbReference type="Gene3D" id="1.10.1040.10">
    <property type="entry name" value="N-(1-d-carboxylethyl)-l-norvaline Dehydrogenase, domain 2"/>
    <property type="match status" value="1"/>
</dbReference>
<dbReference type="Gene3D" id="3.40.50.720">
    <property type="entry name" value="NAD(P)-binding Rossmann-like Domain"/>
    <property type="match status" value="1"/>
</dbReference>
<dbReference type="HAMAP" id="MF_00196">
    <property type="entry name" value="Mannitol_dehydrog"/>
    <property type="match status" value="1"/>
</dbReference>
<dbReference type="InterPro" id="IPR008927">
    <property type="entry name" value="6-PGluconate_DH-like_C_sf"/>
</dbReference>
<dbReference type="InterPro" id="IPR013328">
    <property type="entry name" value="6PGD_dom2"/>
</dbReference>
<dbReference type="InterPro" id="IPR023028">
    <property type="entry name" value="Mannitol_1_phos_5_DH"/>
</dbReference>
<dbReference type="InterPro" id="IPR000669">
    <property type="entry name" value="Mannitol_DH"/>
</dbReference>
<dbReference type="InterPro" id="IPR013118">
    <property type="entry name" value="Mannitol_DH_C"/>
</dbReference>
<dbReference type="InterPro" id="IPR023027">
    <property type="entry name" value="Mannitol_DH_CS"/>
</dbReference>
<dbReference type="InterPro" id="IPR013131">
    <property type="entry name" value="Mannitol_DH_N"/>
</dbReference>
<dbReference type="InterPro" id="IPR036291">
    <property type="entry name" value="NAD(P)-bd_dom_sf"/>
</dbReference>
<dbReference type="NCBIfam" id="NF002646">
    <property type="entry name" value="PRK02318.1-2"/>
    <property type="match status" value="1"/>
</dbReference>
<dbReference type="NCBIfam" id="NF002647">
    <property type="entry name" value="PRK02318.1-3"/>
    <property type="match status" value="1"/>
</dbReference>
<dbReference type="NCBIfam" id="NF002648">
    <property type="entry name" value="PRK02318.1-4"/>
    <property type="match status" value="1"/>
</dbReference>
<dbReference type="NCBIfam" id="NF002650">
    <property type="entry name" value="PRK02318.2-2"/>
    <property type="match status" value="1"/>
</dbReference>
<dbReference type="NCBIfam" id="NF002652">
    <property type="entry name" value="PRK02318.2-5"/>
    <property type="match status" value="1"/>
</dbReference>
<dbReference type="PANTHER" id="PTHR30524:SF0">
    <property type="entry name" value="ALTRONATE OXIDOREDUCTASE-RELATED"/>
    <property type="match status" value="1"/>
</dbReference>
<dbReference type="PANTHER" id="PTHR30524">
    <property type="entry name" value="MANNITOL-1-PHOSPHATE 5-DEHYDROGENASE"/>
    <property type="match status" value="1"/>
</dbReference>
<dbReference type="Pfam" id="PF01232">
    <property type="entry name" value="Mannitol_dh"/>
    <property type="match status" value="1"/>
</dbReference>
<dbReference type="Pfam" id="PF08125">
    <property type="entry name" value="Mannitol_dh_C"/>
    <property type="match status" value="1"/>
</dbReference>
<dbReference type="PRINTS" id="PR00084">
    <property type="entry name" value="MTLDHDRGNASE"/>
</dbReference>
<dbReference type="SUPFAM" id="SSF48179">
    <property type="entry name" value="6-phosphogluconate dehydrogenase C-terminal domain-like"/>
    <property type="match status" value="1"/>
</dbReference>
<dbReference type="SUPFAM" id="SSF51735">
    <property type="entry name" value="NAD(P)-binding Rossmann-fold domains"/>
    <property type="match status" value="1"/>
</dbReference>
<dbReference type="PROSITE" id="PS00974">
    <property type="entry name" value="MANNITOL_DHGENASE"/>
    <property type="match status" value="1"/>
</dbReference>
<name>MTLD_ECO24</name>
<feature type="chain" id="PRO_1000058531" description="Mannitol-1-phosphate 5-dehydrogenase">
    <location>
        <begin position="1"/>
        <end position="382"/>
    </location>
</feature>
<feature type="binding site" evidence="1">
    <location>
        <begin position="3"/>
        <end position="14"/>
    </location>
    <ligand>
        <name>NAD(+)</name>
        <dbReference type="ChEBI" id="CHEBI:57540"/>
    </ligand>
</feature>
<feature type="modified residue" description="N6-acetyllysine" evidence="1">
    <location>
        <position position="269"/>
    </location>
</feature>
<sequence>MKALHFGAGNIGRGFIGKLLADAGIQLTFADVNQVVLDALNARHSYQVHVVGETEQVDTVSGVNAVSSIGDDVVDLIAQVDLVTTAVGPVVLERIAPAIAKGLVKRKEQGNESPLNIIACENMVRGTTQLKGHVMNALPEDAKAWVEEHVGFVDSAVDRIVPPSASATNDPLEVTVETFSEWIVDKTQFKGALPNIPGMELTDNLMAFVERKLFTLNTGHAITAYLGKLAGHQTIRDAILDEKIRAVVKGAMEESGAVLIKRYGFDADKHAAYIQKILGRFENPYLKDDVERVGRQPLRKLSAGDRLIKPLLGTLEYSLPHKNLIQGIAGAMHFRSEDDPQAQELAALIADKGPQAALAQISGLDANSEVVSEAVTAYKAMQ</sequence>
<keyword id="KW-0007">Acetylation</keyword>
<keyword id="KW-0520">NAD</keyword>
<keyword id="KW-0560">Oxidoreductase</keyword>
<keyword id="KW-1185">Reference proteome</keyword>
<protein>
    <recommendedName>
        <fullName evidence="1">Mannitol-1-phosphate 5-dehydrogenase</fullName>
        <ecNumber evidence="1">1.1.1.17</ecNumber>
    </recommendedName>
</protein>
<reference key="1">
    <citation type="journal article" date="2008" name="J. Bacteriol.">
        <title>The pangenome structure of Escherichia coli: comparative genomic analysis of E. coli commensal and pathogenic isolates.</title>
        <authorList>
            <person name="Rasko D.A."/>
            <person name="Rosovitz M.J."/>
            <person name="Myers G.S.A."/>
            <person name="Mongodin E.F."/>
            <person name="Fricke W.F."/>
            <person name="Gajer P."/>
            <person name="Crabtree J."/>
            <person name="Sebaihia M."/>
            <person name="Thomson N.R."/>
            <person name="Chaudhuri R."/>
            <person name="Henderson I.R."/>
            <person name="Sperandio V."/>
            <person name="Ravel J."/>
        </authorList>
    </citation>
    <scope>NUCLEOTIDE SEQUENCE [LARGE SCALE GENOMIC DNA]</scope>
    <source>
        <strain>E24377A / ETEC</strain>
    </source>
</reference>
<comment type="catalytic activity">
    <reaction evidence="1">
        <text>D-mannitol 1-phosphate + NAD(+) = beta-D-fructose 6-phosphate + NADH + H(+)</text>
        <dbReference type="Rhea" id="RHEA:19661"/>
        <dbReference type="ChEBI" id="CHEBI:15378"/>
        <dbReference type="ChEBI" id="CHEBI:57540"/>
        <dbReference type="ChEBI" id="CHEBI:57634"/>
        <dbReference type="ChEBI" id="CHEBI:57945"/>
        <dbReference type="ChEBI" id="CHEBI:61381"/>
        <dbReference type="EC" id="1.1.1.17"/>
    </reaction>
</comment>
<comment type="similarity">
    <text evidence="1">Belongs to the mannitol dehydrogenase family.</text>
</comment>
<proteinExistence type="inferred from homology"/>
<evidence type="ECO:0000255" key="1">
    <source>
        <dbReference type="HAMAP-Rule" id="MF_00196"/>
    </source>
</evidence>
<organism>
    <name type="scientific">Escherichia coli O139:H28 (strain E24377A / ETEC)</name>
    <dbReference type="NCBI Taxonomy" id="331111"/>
    <lineage>
        <taxon>Bacteria</taxon>
        <taxon>Pseudomonadati</taxon>
        <taxon>Pseudomonadota</taxon>
        <taxon>Gammaproteobacteria</taxon>
        <taxon>Enterobacterales</taxon>
        <taxon>Enterobacteriaceae</taxon>
        <taxon>Escherichia</taxon>
    </lineage>
</organism>